<accession>Q8VI63</accession>
<accession>Q3UXL5</accession>
<accession>Q9CZJ5</accession>
<comment type="function">
    <text evidence="1">Stimulates the autophosphorylation and kinase activity of STK38 and STK38L.</text>
</comment>
<comment type="subunit">
    <text evidence="1">Binds STK38 and STK38L.</text>
</comment>
<comment type="subcellular location">
    <subcellularLocation>
        <location evidence="1">Nucleus</location>
    </subcellularLocation>
    <subcellularLocation>
        <location evidence="1">Cytoplasm</location>
        <location evidence="1">Perinuclear region</location>
    </subcellularLocation>
</comment>
<comment type="alternative products">
    <event type="alternative splicing"/>
    <isoform>
        <id>Q8VI63-1</id>
        <name>1</name>
        <sequence type="displayed"/>
    </isoform>
    <isoform>
        <id>Q8VI63-2</id>
        <name>2</name>
        <sequence type="described" ref="VSP_012300"/>
    </isoform>
</comment>
<comment type="PTM">
    <text evidence="1">Phosphorylated.</text>
</comment>
<comment type="similarity">
    <text evidence="4">Belongs to the MOB1/phocein family.</text>
</comment>
<gene>
    <name type="primary">Mob2</name>
    <name type="synonym">Mmh</name>
</gene>
<name>MOB2_MOUSE</name>
<dbReference type="EMBL" id="AF228503">
    <property type="protein sequence ID" value="AAL55655.1"/>
    <property type="molecule type" value="mRNA"/>
</dbReference>
<dbReference type="EMBL" id="AK012535">
    <property type="protein sequence ID" value="BAB28303.1"/>
    <property type="molecule type" value="mRNA"/>
</dbReference>
<dbReference type="EMBL" id="AK135483">
    <property type="protein sequence ID" value="BAE22548.1"/>
    <property type="molecule type" value="mRNA"/>
</dbReference>
<dbReference type="EMBL" id="BC037588">
    <property type="protein sequence ID" value="AAH37588.1"/>
    <property type="molecule type" value="mRNA"/>
</dbReference>
<dbReference type="CCDS" id="CCDS40190.1">
    <molecule id="Q8VI63-1"/>
</dbReference>
<dbReference type="CCDS" id="CCDS85460.1">
    <molecule id="Q8VI63-2"/>
</dbReference>
<dbReference type="RefSeq" id="NP_001334489.1">
    <molecule id="Q8VI63-2"/>
    <property type="nucleotide sequence ID" value="NM_001347560.1"/>
</dbReference>
<dbReference type="RefSeq" id="NP_001369280.1">
    <molecule id="Q8VI63-2"/>
    <property type="nucleotide sequence ID" value="NM_001382351.1"/>
</dbReference>
<dbReference type="RefSeq" id="NP_082584.1">
    <molecule id="Q8VI63-1"/>
    <property type="nucleotide sequence ID" value="NM_028308.2"/>
</dbReference>
<dbReference type="RefSeq" id="XP_017177396.1">
    <property type="nucleotide sequence ID" value="XM_017321907.1"/>
</dbReference>
<dbReference type="RefSeq" id="XP_036008431.1">
    <molecule id="Q8VI63-2"/>
    <property type="nucleotide sequence ID" value="XM_036152538.1"/>
</dbReference>
<dbReference type="SMR" id="Q8VI63"/>
<dbReference type="BioGRID" id="221678">
    <property type="interactions" value="2"/>
</dbReference>
<dbReference type="FunCoup" id="Q8VI63">
    <property type="interactions" value="1146"/>
</dbReference>
<dbReference type="STRING" id="10090.ENSMUSP00000081455"/>
<dbReference type="iPTMnet" id="Q8VI63"/>
<dbReference type="PhosphoSitePlus" id="Q8VI63"/>
<dbReference type="CPTAC" id="non-CPTAC-3728"/>
<dbReference type="PaxDb" id="10090-ENSMUSP00000081455"/>
<dbReference type="PeptideAtlas" id="Q8VI63"/>
<dbReference type="ProteomicsDB" id="295650">
    <molecule id="Q8VI63-1"/>
</dbReference>
<dbReference type="ProteomicsDB" id="295651">
    <molecule id="Q8VI63-2"/>
</dbReference>
<dbReference type="Pumba" id="Q8VI63"/>
<dbReference type="Antibodypedia" id="22879">
    <property type="antibodies" value="152 antibodies from 27 providers"/>
</dbReference>
<dbReference type="DNASU" id="101513"/>
<dbReference type="Ensembl" id="ENSMUST00000084418.4">
    <molecule id="Q8VI63-1"/>
    <property type="protein sequence ID" value="ENSMUSP00000081455.3"/>
    <property type="gene ID" value="ENSMUSG00000025147.8"/>
</dbReference>
<dbReference type="Ensembl" id="ENSMUST00000211000.2">
    <molecule id="Q8VI63-2"/>
    <property type="protein sequence ID" value="ENSMUSP00000147643.2"/>
    <property type="gene ID" value="ENSMUSG00000025147.8"/>
</dbReference>
<dbReference type="Ensembl" id="ENSMUST00000211206.2">
    <molecule id="Q8VI63-2"/>
    <property type="protein sequence ID" value="ENSMUSP00000147608.2"/>
    <property type="gene ID" value="ENSMUSG00000025147.8"/>
</dbReference>
<dbReference type="GeneID" id="101513"/>
<dbReference type="KEGG" id="mmu:101513"/>
<dbReference type="UCSC" id="uc009kmk.1">
    <molecule id="Q8VI63-1"/>
    <property type="organism name" value="mouse"/>
</dbReference>
<dbReference type="AGR" id="MGI:1919891"/>
<dbReference type="CTD" id="81532"/>
<dbReference type="MGI" id="MGI:1919891">
    <property type="gene designation" value="Mob2"/>
</dbReference>
<dbReference type="VEuPathDB" id="HostDB:ENSMUSG00000025147"/>
<dbReference type="eggNOG" id="KOG0440">
    <property type="taxonomic scope" value="Eukaryota"/>
</dbReference>
<dbReference type="GeneTree" id="ENSGT01120000271909"/>
<dbReference type="HOGENOM" id="CLU_038321_1_0_1"/>
<dbReference type="InParanoid" id="Q8VI63"/>
<dbReference type="OMA" id="CNHSSER"/>
<dbReference type="PhylomeDB" id="Q8VI63"/>
<dbReference type="TreeFam" id="TF300789"/>
<dbReference type="BioGRID-ORCS" id="101513">
    <property type="hits" value="3 hits in 43 CRISPR screens"/>
</dbReference>
<dbReference type="ChiTaRS" id="Mob2">
    <property type="organism name" value="mouse"/>
</dbReference>
<dbReference type="PRO" id="PR:Q8VI63"/>
<dbReference type="Proteomes" id="UP000000589">
    <property type="component" value="Chromosome 7"/>
</dbReference>
<dbReference type="RNAct" id="Q8VI63">
    <property type="molecule type" value="protein"/>
</dbReference>
<dbReference type="Bgee" id="ENSMUSG00000025147">
    <property type="expression patterns" value="Expressed in hindlimb stylopod muscle and 226 other cell types or tissues"/>
</dbReference>
<dbReference type="ExpressionAtlas" id="Q8VI63">
    <property type="expression patterns" value="baseline and differential"/>
</dbReference>
<dbReference type="GO" id="GO:0005737">
    <property type="term" value="C:cytoplasm"/>
    <property type="evidence" value="ECO:0000314"/>
    <property type="project" value="MGI"/>
</dbReference>
<dbReference type="GO" id="GO:0044306">
    <property type="term" value="C:neuron projection terminus"/>
    <property type="evidence" value="ECO:0000314"/>
    <property type="project" value="MGI"/>
</dbReference>
<dbReference type="GO" id="GO:0005634">
    <property type="term" value="C:nucleus"/>
    <property type="evidence" value="ECO:0007669"/>
    <property type="project" value="UniProtKB-SubCell"/>
</dbReference>
<dbReference type="GO" id="GO:0048471">
    <property type="term" value="C:perinuclear region of cytoplasm"/>
    <property type="evidence" value="ECO:0007669"/>
    <property type="project" value="UniProtKB-SubCell"/>
</dbReference>
<dbReference type="GO" id="GO:0046872">
    <property type="term" value="F:metal ion binding"/>
    <property type="evidence" value="ECO:0007669"/>
    <property type="project" value="UniProtKB-KW"/>
</dbReference>
<dbReference type="GO" id="GO:0030036">
    <property type="term" value="P:actin cytoskeleton organization"/>
    <property type="evidence" value="ECO:0000315"/>
    <property type="project" value="MGI"/>
</dbReference>
<dbReference type="GO" id="GO:0010976">
    <property type="term" value="P:positive regulation of neuron projection development"/>
    <property type="evidence" value="ECO:0000315"/>
    <property type="project" value="MGI"/>
</dbReference>
<dbReference type="FunFam" id="1.20.140.30:FF:000003">
    <property type="entry name" value="MOB kinase activator 2"/>
    <property type="match status" value="1"/>
</dbReference>
<dbReference type="Gene3D" id="1.20.140.30">
    <property type="entry name" value="MOB kinase activator"/>
    <property type="match status" value="1"/>
</dbReference>
<dbReference type="InterPro" id="IPR005301">
    <property type="entry name" value="MOB_kinase_act_fam"/>
</dbReference>
<dbReference type="InterPro" id="IPR036703">
    <property type="entry name" value="MOB_kinase_act_sf"/>
</dbReference>
<dbReference type="PANTHER" id="PTHR22599">
    <property type="entry name" value="MPS ONE BINDER KINASE ACTIVATOR-LIKE MOB"/>
    <property type="match status" value="1"/>
</dbReference>
<dbReference type="Pfam" id="PF03637">
    <property type="entry name" value="Mob1_phocein"/>
    <property type="match status" value="1"/>
</dbReference>
<dbReference type="SMART" id="SM01388">
    <property type="entry name" value="Mob1_phocein"/>
    <property type="match status" value="1"/>
</dbReference>
<dbReference type="SUPFAM" id="SSF101152">
    <property type="entry name" value="Mob1/phocein"/>
    <property type="match status" value="1"/>
</dbReference>
<evidence type="ECO:0000250" key="1"/>
<evidence type="ECO:0000256" key="2">
    <source>
        <dbReference type="SAM" id="MobiDB-lite"/>
    </source>
</evidence>
<evidence type="ECO:0000303" key="3">
    <source>
    </source>
</evidence>
<evidence type="ECO:0000305" key="4"/>
<feature type="chain" id="PRO_0000193569" description="MOB kinase activator 2">
    <location>
        <begin position="1"/>
        <end position="235"/>
    </location>
</feature>
<feature type="region of interest" description="Disordered" evidence="2">
    <location>
        <begin position="1"/>
        <end position="22"/>
    </location>
</feature>
<feature type="region of interest" description="Disordered" evidence="2">
    <location>
        <begin position="213"/>
        <end position="235"/>
    </location>
</feature>
<feature type="binding site" evidence="1">
    <location>
        <position position="78"/>
    </location>
    <ligand>
        <name>Zn(2+)</name>
        <dbReference type="ChEBI" id="CHEBI:29105"/>
    </ligand>
</feature>
<feature type="binding site" evidence="1">
    <location>
        <position position="83"/>
    </location>
    <ligand>
        <name>Zn(2+)</name>
        <dbReference type="ChEBI" id="CHEBI:29105"/>
    </ligand>
</feature>
<feature type="binding site" evidence="1">
    <location>
        <position position="157"/>
    </location>
    <ligand>
        <name>Zn(2+)</name>
        <dbReference type="ChEBI" id="CHEBI:29105"/>
    </ligand>
</feature>
<feature type="binding site" evidence="1">
    <location>
        <position position="162"/>
    </location>
    <ligand>
        <name>Zn(2+)</name>
        <dbReference type="ChEBI" id="CHEBI:29105"/>
    </ligand>
</feature>
<feature type="splice variant" id="VSP_012300" description="In isoform 2." evidence="3">
    <location>
        <begin position="1"/>
        <end position="85"/>
    </location>
</feature>
<protein>
    <recommendedName>
        <fullName>MOB kinase activator 2</fullName>
    </recommendedName>
    <alternativeName>
        <fullName>Mob2 homolog</fullName>
    </alternativeName>
    <alternativeName>
        <fullName>Mps one binder kinase activator-like 2</fullName>
    </alternativeName>
    <alternativeName>
        <fullName>Ovary-specific MOB-like protein</fullName>
    </alternativeName>
</protein>
<organism>
    <name type="scientific">Mus musculus</name>
    <name type="common">Mouse</name>
    <dbReference type="NCBI Taxonomy" id="10090"/>
    <lineage>
        <taxon>Eukaryota</taxon>
        <taxon>Metazoa</taxon>
        <taxon>Chordata</taxon>
        <taxon>Craniata</taxon>
        <taxon>Vertebrata</taxon>
        <taxon>Euteleostomi</taxon>
        <taxon>Mammalia</taxon>
        <taxon>Eutheria</taxon>
        <taxon>Euarchontoglires</taxon>
        <taxon>Glires</taxon>
        <taxon>Rodentia</taxon>
        <taxon>Myomorpha</taxon>
        <taxon>Muroidea</taxon>
        <taxon>Muridae</taxon>
        <taxon>Murinae</taxon>
        <taxon>Mus</taxon>
        <taxon>Mus</taxon>
    </lineage>
</organism>
<proteinExistence type="evidence at protein level"/>
<reference key="1">
    <citation type="submission" date="2000-01" db="EMBL/GenBank/DDBJ databases">
        <title>Ovary-selective genes I: the generation and characterization of an ovary-selective cDNA library.</title>
        <authorList>
            <person name="Hennebold J.D."/>
            <person name="Tanaka M."/>
            <person name="Saito J."/>
            <person name="Hanson B.R."/>
            <person name="Adashi E.Y."/>
        </authorList>
    </citation>
    <scope>NUCLEOTIDE SEQUENCE [MRNA] (ISOFORM 1)</scope>
    <source>
        <tissue>Ovary</tissue>
    </source>
</reference>
<reference key="2">
    <citation type="journal article" date="2005" name="Science">
        <title>The transcriptional landscape of the mammalian genome.</title>
        <authorList>
            <person name="Carninci P."/>
            <person name="Kasukawa T."/>
            <person name="Katayama S."/>
            <person name="Gough J."/>
            <person name="Frith M.C."/>
            <person name="Maeda N."/>
            <person name="Oyama R."/>
            <person name="Ravasi T."/>
            <person name="Lenhard B."/>
            <person name="Wells C."/>
            <person name="Kodzius R."/>
            <person name="Shimokawa K."/>
            <person name="Bajic V.B."/>
            <person name="Brenner S.E."/>
            <person name="Batalov S."/>
            <person name="Forrest A.R."/>
            <person name="Zavolan M."/>
            <person name="Davis M.J."/>
            <person name="Wilming L.G."/>
            <person name="Aidinis V."/>
            <person name="Allen J.E."/>
            <person name="Ambesi-Impiombato A."/>
            <person name="Apweiler R."/>
            <person name="Aturaliya R.N."/>
            <person name="Bailey T.L."/>
            <person name="Bansal M."/>
            <person name="Baxter L."/>
            <person name="Beisel K.W."/>
            <person name="Bersano T."/>
            <person name="Bono H."/>
            <person name="Chalk A.M."/>
            <person name="Chiu K.P."/>
            <person name="Choudhary V."/>
            <person name="Christoffels A."/>
            <person name="Clutterbuck D.R."/>
            <person name="Crowe M.L."/>
            <person name="Dalla E."/>
            <person name="Dalrymple B.P."/>
            <person name="de Bono B."/>
            <person name="Della Gatta G."/>
            <person name="di Bernardo D."/>
            <person name="Down T."/>
            <person name="Engstrom P."/>
            <person name="Fagiolini M."/>
            <person name="Faulkner G."/>
            <person name="Fletcher C.F."/>
            <person name="Fukushima T."/>
            <person name="Furuno M."/>
            <person name="Futaki S."/>
            <person name="Gariboldi M."/>
            <person name="Georgii-Hemming P."/>
            <person name="Gingeras T.R."/>
            <person name="Gojobori T."/>
            <person name="Green R.E."/>
            <person name="Gustincich S."/>
            <person name="Harbers M."/>
            <person name="Hayashi Y."/>
            <person name="Hensch T.K."/>
            <person name="Hirokawa N."/>
            <person name="Hill D."/>
            <person name="Huminiecki L."/>
            <person name="Iacono M."/>
            <person name="Ikeo K."/>
            <person name="Iwama A."/>
            <person name="Ishikawa T."/>
            <person name="Jakt M."/>
            <person name="Kanapin A."/>
            <person name="Katoh M."/>
            <person name="Kawasawa Y."/>
            <person name="Kelso J."/>
            <person name="Kitamura H."/>
            <person name="Kitano H."/>
            <person name="Kollias G."/>
            <person name="Krishnan S.P."/>
            <person name="Kruger A."/>
            <person name="Kummerfeld S.K."/>
            <person name="Kurochkin I.V."/>
            <person name="Lareau L.F."/>
            <person name="Lazarevic D."/>
            <person name="Lipovich L."/>
            <person name="Liu J."/>
            <person name="Liuni S."/>
            <person name="McWilliam S."/>
            <person name="Madan Babu M."/>
            <person name="Madera M."/>
            <person name="Marchionni L."/>
            <person name="Matsuda H."/>
            <person name="Matsuzawa S."/>
            <person name="Miki H."/>
            <person name="Mignone F."/>
            <person name="Miyake S."/>
            <person name="Morris K."/>
            <person name="Mottagui-Tabar S."/>
            <person name="Mulder N."/>
            <person name="Nakano N."/>
            <person name="Nakauchi H."/>
            <person name="Ng P."/>
            <person name="Nilsson R."/>
            <person name="Nishiguchi S."/>
            <person name="Nishikawa S."/>
            <person name="Nori F."/>
            <person name="Ohara O."/>
            <person name="Okazaki Y."/>
            <person name="Orlando V."/>
            <person name="Pang K.C."/>
            <person name="Pavan W.J."/>
            <person name="Pavesi G."/>
            <person name="Pesole G."/>
            <person name="Petrovsky N."/>
            <person name="Piazza S."/>
            <person name="Reed J."/>
            <person name="Reid J.F."/>
            <person name="Ring B.Z."/>
            <person name="Ringwald M."/>
            <person name="Rost B."/>
            <person name="Ruan Y."/>
            <person name="Salzberg S.L."/>
            <person name="Sandelin A."/>
            <person name="Schneider C."/>
            <person name="Schoenbach C."/>
            <person name="Sekiguchi K."/>
            <person name="Semple C.A."/>
            <person name="Seno S."/>
            <person name="Sessa L."/>
            <person name="Sheng Y."/>
            <person name="Shibata Y."/>
            <person name="Shimada H."/>
            <person name="Shimada K."/>
            <person name="Silva D."/>
            <person name="Sinclair B."/>
            <person name="Sperling S."/>
            <person name="Stupka E."/>
            <person name="Sugiura K."/>
            <person name="Sultana R."/>
            <person name="Takenaka Y."/>
            <person name="Taki K."/>
            <person name="Tammoja K."/>
            <person name="Tan S.L."/>
            <person name="Tang S."/>
            <person name="Taylor M.S."/>
            <person name="Tegner J."/>
            <person name="Teichmann S.A."/>
            <person name="Ueda H.R."/>
            <person name="van Nimwegen E."/>
            <person name="Verardo R."/>
            <person name="Wei C.L."/>
            <person name="Yagi K."/>
            <person name="Yamanishi H."/>
            <person name="Zabarovsky E."/>
            <person name="Zhu S."/>
            <person name="Zimmer A."/>
            <person name="Hide W."/>
            <person name="Bult C."/>
            <person name="Grimmond S.M."/>
            <person name="Teasdale R.D."/>
            <person name="Liu E.T."/>
            <person name="Brusic V."/>
            <person name="Quackenbush J."/>
            <person name="Wahlestedt C."/>
            <person name="Mattick J.S."/>
            <person name="Hume D.A."/>
            <person name="Kai C."/>
            <person name="Sasaki D."/>
            <person name="Tomaru Y."/>
            <person name="Fukuda S."/>
            <person name="Kanamori-Katayama M."/>
            <person name="Suzuki M."/>
            <person name="Aoki J."/>
            <person name="Arakawa T."/>
            <person name="Iida J."/>
            <person name="Imamura K."/>
            <person name="Itoh M."/>
            <person name="Kato T."/>
            <person name="Kawaji H."/>
            <person name="Kawagashira N."/>
            <person name="Kawashima T."/>
            <person name="Kojima M."/>
            <person name="Kondo S."/>
            <person name="Konno H."/>
            <person name="Nakano K."/>
            <person name="Ninomiya N."/>
            <person name="Nishio T."/>
            <person name="Okada M."/>
            <person name="Plessy C."/>
            <person name="Shibata K."/>
            <person name="Shiraki T."/>
            <person name="Suzuki S."/>
            <person name="Tagami M."/>
            <person name="Waki K."/>
            <person name="Watahiki A."/>
            <person name="Okamura-Oho Y."/>
            <person name="Suzuki H."/>
            <person name="Kawai J."/>
            <person name="Hayashizaki Y."/>
        </authorList>
    </citation>
    <scope>NUCLEOTIDE SEQUENCE [LARGE SCALE MRNA] (ISOFORMS 1 AND 2)</scope>
    <source>
        <strain>C57BL/6J</strain>
        <tissue>Embryo</tissue>
        <tissue>Muellerian duct</tissue>
    </source>
</reference>
<reference key="3">
    <citation type="journal article" date="2004" name="Genome Res.">
        <title>The status, quality, and expansion of the NIH full-length cDNA project: the Mammalian Gene Collection (MGC).</title>
        <authorList>
            <consortium name="The MGC Project Team"/>
        </authorList>
    </citation>
    <scope>NUCLEOTIDE SEQUENCE [LARGE SCALE MRNA] (ISOFORM 1)</scope>
    <source>
        <strain>FVB/N-3</strain>
        <tissue>Mammary tumor</tissue>
    </source>
</reference>
<reference key="4">
    <citation type="journal article" date="2010" name="Cell">
        <title>A tissue-specific atlas of mouse protein phosphorylation and expression.</title>
        <authorList>
            <person name="Huttlin E.L."/>
            <person name="Jedrychowski M.P."/>
            <person name="Elias J.E."/>
            <person name="Goswami T."/>
            <person name="Rad R."/>
            <person name="Beausoleil S.A."/>
            <person name="Villen J."/>
            <person name="Haas W."/>
            <person name="Sowa M.E."/>
            <person name="Gygi S.P."/>
        </authorList>
    </citation>
    <scope>IDENTIFICATION BY MASS SPECTROMETRY [LARGE SCALE ANALYSIS]</scope>
    <source>
        <tissue>Brain</tissue>
        <tissue>Kidney</tissue>
        <tissue>Lung</tissue>
        <tissue>Testis</tissue>
    </source>
</reference>
<sequence length="235" mass="26851">MDWLMGKSKAKPNGKKPAAEEKKVYLEPEHTKSRITDFEFKELVVLPREIDLNEWLASNTTTFFHHINLQYSTISEFCTGETCQTMAVCNTQYYWYDERGKKVKCTAPQYVDFVMSSVQKLVTDEDVFPTKYGREFPSSFESLVKKICKYLFHVLGHIYWAHFKETLALELHGHLNTLYVHFILFAREFNLLDPKETAVMDDLTEVLCSSPGNSGATGDGANSGASGAQNHVKER</sequence>
<keyword id="KW-0025">Alternative splicing</keyword>
<keyword id="KW-0963">Cytoplasm</keyword>
<keyword id="KW-0479">Metal-binding</keyword>
<keyword id="KW-0539">Nucleus</keyword>
<keyword id="KW-0597">Phosphoprotein</keyword>
<keyword id="KW-1185">Reference proteome</keyword>
<keyword id="KW-0862">Zinc</keyword>